<organism>
    <name type="scientific">Vibrio campbellii (strain ATCC BAA-1116)</name>
    <dbReference type="NCBI Taxonomy" id="2902295"/>
    <lineage>
        <taxon>Bacteria</taxon>
        <taxon>Pseudomonadati</taxon>
        <taxon>Pseudomonadota</taxon>
        <taxon>Gammaproteobacteria</taxon>
        <taxon>Vibrionales</taxon>
        <taxon>Vibrionaceae</taxon>
        <taxon>Vibrio</taxon>
    </lineage>
</organism>
<protein>
    <recommendedName>
        <fullName evidence="1">Bis(5'-nucleosyl)-tetraphosphatase, symmetrical</fullName>
        <ecNumber evidence="1">3.6.1.41</ecNumber>
    </recommendedName>
    <alternativeName>
        <fullName evidence="1">Ap4A hydrolase</fullName>
    </alternativeName>
    <alternativeName>
        <fullName evidence="1">Diadenosine 5',5'''-P1,P4-tetraphosphate pyrophosphohydrolase</fullName>
    </alternativeName>
    <alternativeName>
        <fullName evidence="1">Diadenosine tetraphosphatase</fullName>
    </alternativeName>
</protein>
<reference key="1">
    <citation type="submission" date="2007-08" db="EMBL/GenBank/DDBJ databases">
        <authorList>
            <consortium name="The Vibrio harveyi Genome Sequencing Project"/>
            <person name="Bassler B."/>
            <person name="Clifton S.W."/>
            <person name="Fulton L."/>
            <person name="Delehaunty K."/>
            <person name="Fronick C."/>
            <person name="Harrison M."/>
            <person name="Markivic C."/>
            <person name="Fulton R."/>
            <person name="Tin-Wollam A.-M."/>
            <person name="Shah N."/>
            <person name="Pepin K."/>
            <person name="Nash W."/>
            <person name="Thiruvilangam P."/>
            <person name="Bhonagiri V."/>
            <person name="Waters C."/>
            <person name="Tu K.C."/>
            <person name="Irgon J."/>
            <person name="Wilson R.K."/>
        </authorList>
    </citation>
    <scope>NUCLEOTIDE SEQUENCE [LARGE SCALE GENOMIC DNA]</scope>
    <source>
        <strain>ATCC BAA-1116 / BB120</strain>
    </source>
</reference>
<evidence type="ECO:0000255" key="1">
    <source>
        <dbReference type="HAMAP-Rule" id="MF_00199"/>
    </source>
</evidence>
<accession>A7N0G6</accession>
<proteinExistence type="inferred from homology"/>
<gene>
    <name evidence="1" type="primary">apaH</name>
    <name type="ordered locus">VIBHAR_00806</name>
</gene>
<sequence length="268" mass="30486">MATYIVGDIQGCFDELQQLLEQVNFSASHDQLWLAGDLVARGPKSLETLRFVKSLGDSAKVVLGNHDLHLMAVSQGLKKVKDKDKTAPIFSAPDKKELLTWLSQQPLLAEHDDFVMCHAGISPLWDLDTARNCAREVEAIIRSKQLPWLLENMYSNQPDLWDESLSGLDRYRYTINTFTRMRFCFPDGRLDMDCKLPPQEVSEDELVPWFKLPQRVPLEKAVLFGHWAALQGHIDENIIGLDTGCVWGGSLTMIRWEDKQVFTQQALS</sequence>
<dbReference type="EC" id="3.6.1.41" evidence="1"/>
<dbReference type="EMBL" id="CP000789">
    <property type="protein sequence ID" value="ABU69807.1"/>
    <property type="molecule type" value="Genomic_DNA"/>
</dbReference>
<dbReference type="RefSeq" id="WP_012126917.1">
    <property type="nucleotide sequence ID" value="NC_022269.1"/>
</dbReference>
<dbReference type="SMR" id="A7N0G6"/>
<dbReference type="KEGG" id="vha:VIBHAR_00806"/>
<dbReference type="PATRIC" id="fig|338187.25.peg.1809"/>
<dbReference type="Proteomes" id="UP000008152">
    <property type="component" value="Chromosome I"/>
</dbReference>
<dbReference type="GO" id="GO:0008803">
    <property type="term" value="F:bis(5'-nucleosyl)-tetraphosphatase (symmetrical) activity"/>
    <property type="evidence" value="ECO:0007669"/>
    <property type="project" value="UniProtKB-UniRule"/>
</dbReference>
<dbReference type="CDD" id="cd07422">
    <property type="entry name" value="MPP_ApaH"/>
    <property type="match status" value="1"/>
</dbReference>
<dbReference type="Gene3D" id="3.60.21.10">
    <property type="match status" value="1"/>
</dbReference>
<dbReference type="HAMAP" id="MF_00199">
    <property type="entry name" value="ApaH"/>
    <property type="match status" value="1"/>
</dbReference>
<dbReference type="InterPro" id="IPR004617">
    <property type="entry name" value="ApaH"/>
</dbReference>
<dbReference type="InterPro" id="IPR004843">
    <property type="entry name" value="Calcineurin-like_PHP_ApaH"/>
</dbReference>
<dbReference type="InterPro" id="IPR029052">
    <property type="entry name" value="Metallo-depent_PP-like"/>
</dbReference>
<dbReference type="NCBIfam" id="TIGR00668">
    <property type="entry name" value="apaH"/>
    <property type="match status" value="1"/>
</dbReference>
<dbReference type="NCBIfam" id="NF001204">
    <property type="entry name" value="PRK00166.1"/>
    <property type="match status" value="1"/>
</dbReference>
<dbReference type="PANTHER" id="PTHR40942">
    <property type="match status" value="1"/>
</dbReference>
<dbReference type="PANTHER" id="PTHR40942:SF4">
    <property type="entry name" value="CYTOCHROME C5"/>
    <property type="match status" value="1"/>
</dbReference>
<dbReference type="Pfam" id="PF00149">
    <property type="entry name" value="Metallophos"/>
    <property type="match status" value="1"/>
</dbReference>
<dbReference type="PIRSF" id="PIRSF000903">
    <property type="entry name" value="B5n-ttraPtase_sm"/>
    <property type="match status" value="1"/>
</dbReference>
<dbReference type="SUPFAM" id="SSF56300">
    <property type="entry name" value="Metallo-dependent phosphatases"/>
    <property type="match status" value="1"/>
</dbReference>
<comment type="function">
    <text evidence="1">Hydrolyzes diadenosine 5',5'''-P1,P4-tetraphosphate to yield ADP.</text>
</comment>
<comment type="catalytic activity">
    <reaction evidence="1">
        <text>P(1),P(4)-bis(5'-adenosyl) tetraphosphate + H2O = 2 ADP + 2 H(+)</text>
        <dbReference type="Rhea" id="RHEA:24252"/>
        <dbReference type="ChEBI" id="CHEBI:15377"/>
        <dbReference type="ChEBI" id="CHEBI:15378"/>
        <dbReference type="ChEBI" id="CHEBI:58141"/>
        <dbReference type="ChEBI" id="CHEBI:456216"/>
        <dbReference type="EC" id="3.6.1.41"/>
    </reaction>
</comment>
<comment type="similarity">
    <text evidence="1">Belongs to the Ap4A hydrolase family.</text>
</comment>
<feature type="chain" id="PRO_1000012104" description="Bis(5'-nucleosyl)-tetraphosphatase, symmetrical">
    <location>
        <begin position="1"/>
        <end position="268"/>
    </location>
</feature>
<keyword id="KW-0378">Hydrolase</keyword>
<name>APAH_VIBC1</name>